<name>PDUA_CITFR</name>
<keyword id="KW-0002">3D-structure</keyword>
<keyword id="KW-1283">Bacterial microcompartment</keyword>
<keyword id="KW-0813">Transport</keyword>
<dbReference type="EMBL" id="AM498294">
    <property type="protein sequence ID" value="CAM57283.1"/>
    <property type="molecule type" value="Genomic_DNA"/>
</dbReference>
<dbReference type="RefSeq" id="WP_003030255.1">
    <property type="nucleotide sequence ID" value="NZ_VWTQ01000002.1"/>
</dbReference>
<dbReference type="PDB" id="4P7T">
    <property type="method" value="X-ray"/>
    <property type="resolution" value="1.72 A"/>
    <property type="chains" value="A/B/C/D/E/F=1-92"/>
</dbReference>
<dbReference type="PDB" id="4P7V">
    <property type="method" value="X-ray"/>
    <property type="resolution" value="1.93 A"/>
    <property type="chains" value="A/B/C/D/E/F=1-92"/>
</dbReference>
<dbReference type="PDBsum" id="4P7T"/>
<dbReference type="PDBsum" id="4P7V"/>
<dbReference type="SMR" id="P0DUM6"/>
<dbReference type="GeneID" id="89548324"/>
<dbReference type="OrthoDB" id="9812608at2"/>
<dbReference type="UniPathway" id="UPA00621"/>
<dbReference type="GO" id="GO:0031469">
    <property type="term" value="C:bacterial microcompartment"/>
    <property type="evidence" value="ECO:0007669"/>
    <property type="project" value="UniProtKB-SubCell"/>
</dbReference>
<dbReference type="GO" id="GO:0051144">
    <property type="term" value="P:propanediol catabolic process"/>
    <property type="evidence" value="ECO:0007669"/>
    <property type="project" value="UniProtKB-UniPathway"/>
</dbReference>
<dbReference type="CDD" id="cd07045">
    <property type="entry name" value="BMC_CcmK_like"/>
    <property type="match status" value="1"/>
</dbReference>
<dbReference type="Gene3D" id="3.30.70.1710">
    <property type="match status" value="1"/>
</dbReference>
<dbReference type="InterPro" id="IPR020808">
    <property type="entry name" value="Bact_microcomp_CS"/>
</dbReference>
<dbReference type="InterPro" id="IPR000249">
    <property type="entry name" value="BMC_dom"/>
</dbReference>
<dbReference type="InterPro" id="IPR050575">
    <property type="entry name" value="BMC_shell"/>
</dbReference>
<dbReference type="InterPro" id="IPR037233">
    <property type="entry name" value="CcmK-like_sf"/>
</dbReference>
<dbReference type="InterPro" id="IPR044872">
    <property type="entry name" value="CcmK/CsoS1_BMC"/>
</dbReference>
<dbReference type="PANTHER" id="PTHR33941:SF11">
    <property type="entry name" value="BACTERIAL MICROCOMPARTMENT SHELL PROTEIN PDUJ"/>
    <property type="match status" value="1"/>
</dbReference>
<dbReference type="PANTHER" id="PTHR33941">
    <property type="entry name" value="PROPANEDIOL UTILIZATION PROTEIN PDUA"/>
    <property type="match status" value="1"/>
</dbReference>
<dbReference type="Pfam" id="PF00936">
    <property type="entry name" value="BMC"/>
    <property type="match status" value="1"/>
</dbReference>
<dbReference type="SMART" id="SM00877">
    <property type="entry name" value="BMC"/>
    <property type="match status" value="1"/>
</dbReference>
<dbReference type="SUPFAM" id="SSF143414">
    <property type="entry name" value="CcmK-like"/>
    <property type="match status" value="1"/>
</dbReference>
<dbReference type="PROSITE" id="PS01139">
    <property type="entry name" value="BMC_1"/>
    <property type="match status" value="1"/>
</dbReference>
<dbReference type="PROSITE" id="PS51930">
    <property type="entry name" value="BMC_2"/>
    <property type="match status" value="1"/>
</dbReference>
<feature type="chain" id="PRO_0000454246" description="Bacterial microcompartment shell protein PduA">
    <location>
        <begin position="1"/>
        <end position="93"/>
    </location>
</feature>
<feature type="domain" description="BMC" evidence="3">
    <location>
        <begin position="5"/>
        <end position="89"/>
    </location>
</feature>
<feature type="mutagenesis site" description="Forms sheets but not nanotubes upon overexpression of PduA*." evidence="6">
    <original>K</original>
    <variation>A</variation>
    <location>
        <position position="26"/>
    </location>
</feature>
<feature type="mutagenesis site" description="No intracellular structures formed upon overexpression of PduA*, decreases stability of hexamers which are no longer symmetric and do not form arrays correctly." evidence="6">
    <original>K</original>
    <variation>D</variation>
    <location>
        <position position="26"/>
    </location>
</feature>
<feature type="mutagenesis site" description="Forms sheets and altered nanotubes upon overexpression of PduA*." evidence="6">
    <original>V</original>
    <variation>A</variation>
    <location>
        <position position="51"/>
    </location>
</feature>
<feature type="mutagenesis site" description="No structures formed upon overexpression of PduA*." evidence="6">
    <original>V</original>
    <variation>D</variation>
    <location>
        <position position="51"/>
    </location>
</feature>
<feature type="mutagenesis site" description="Forms sheets but not nanotubes upon overexpression of PduA*." evidence="6">
    <original>R</original>
    <variation>A</variation>
    <location>
        <position position="79"/>
    </location>
</feature>
<feature type="mutagenesis site" description="PduA*, a soluble form used for crystal structure determination." evidence="5 6 17 18">
    <original>S</original>
    <variation>RLVKDPAANKARKEAELAAATAEQ</variation>
    <location>
        <position position="93"/>
    </location>
</feature>
<proteinExistence type="evidence at protein level"/>
<comment type="function">
    <text evidence="2 5 6 8 12 13 14 16">One of the major shell proteins of the bacterial microcompartment (BMC) dedicated to 1,2-propanediol (1,2-PD) degradation, probably important for metabolite diffusion into and out of the BMC (Probable). Overexpression of a C-terminally mutated form (PduA*) makes thin parallel filaments with a honeycomb-like assembly in cross-section that probably form nanotubes. The filaments interfere with septation (PubMed:20417607, PubMed:24873823, PubMed:29227472). PduA is probably the hub for binding multiple enzymes to the interior of the BMC (Probable). At least one of PduA or PduJ is required for BMC assembly; it must be encoded as the first gene in the pdu operon (By similarity).</text>
</comment>
<comment type="function">
    <text evidence="4">Expression of a cosmid containing the full 21-gene pdu operon in E.coli allows E.coli to grow on 1,2-PD with the appearance of BMCs in its cytoplasm. Overexpression of this protein leads to aberrant intracellular filaments.</text>
</comment>
<comment type="function">
    <text evidence="12">The 1,2-PD-specific bacterial microcompartment (BMC) concentrates low levels of 1,2-PD catabolic enzymes, concentrates volatile reaction intermediates thus enhancing pathway flux and keeps the level of toxic, mutagenic propionaldehyde low.</text>
</comment>
<comment type="pathway">
    <text evidence="4">Polyol metabolism; 1,2-propanediol degradation.</text>
</comment>
<comment type="subunit">
    <text evidence="1 5 6 14">Homohexamer with a central pore; Lys-26 and Arg-79 interactions are very important for hexamer symmetry (PubMed:24873823). The hexamers pack against each other in arrays (By similarity). Interacts individually with shell proteins PduB, PduB', PduJ, PduK, PduN and PduU (PubMed:20417607). Modeling suggests PduC, PduD, PduE, PduL and PduP interact with a cleft formed by the C-terminal segments of 2 adjacent PduA subunits (on the BMC luminal side) in the hexamer (Probable).</text>
</comment>
<comment type="subcellular location">
    <subcellularLocation>
        <location evidence="4 5">Bacterial microcompartment</location>
    </subcellularLocation>
    <text evidence="14 15">In BMCs the hexamer concave side probably faces outward, with the N- and C-termini exposed to the cytoplasm (Probable). Modeling suggests the concave face (with both termini) is in the interior of the BMC (Probable).</text>
</comment>
<comment type="disruption phenotype">
    <text evidence="4 9">When the whole pdu operon except this gene is expressed in E.coli no BMCs are made; with the whole operon many BMCs are produced in E.coli (PubMed:18332146). This gene is not essential for BMC formation; a pduB/B'-pduJ-pduK-pduN-pduU-pduT strain produces BMCs in E.coli (PubMed:29573556).</text>
</comment>
<comment type="biotechnology">
    <text evidence="5 7 9">Artificial BMCs can be made in E.coli by expressing pduA-pduB/B'-pduJ-pduK-pduN-pduU-pduT (in this order); pduT and pduU are optional, while pduA, pduB/B', pduJ, pduK and pduN are essential. A construct with the reversed gene order does not make BMCs (PubMed:20417607). Ethanogenic BMCs can be made in E.coli by targeting pyruvate decarboxylase (pdc) and alcohol dehydrogenase (adh) to them. PduP(1-18)-Pdc and PduD(1-18)-Adh strains targeted to the BMC (PduA, PduB, PduJ, PduK, PduN, PduU) make significantly more ethanol than strains where Pdc and Adh are not targeted to the BMC (PubMed:24933391). A circularly permutated form can be made in which residues 69-89 are displaced to the beginning of the protein with an extra linker. Both termini of this construct are probably in the BMC lumen and it can be used to target proteins to the BMC interior (PubMed:29573556).</text>
</comment>
<comment type="biotechnology">
    <text evidence="8 9">Can be used to make a synthetic intracellular scaffold that fills the E.coli cytoplasm by adding a heterodimeric coiled-coil system (CC-Di-AB). PduA* is N-terminally tagged with CC-Di-B which makes the scaffold, while other proteins can be targeted to the scaffold using a CC-Di-A tag. A strain that produces increased amounts of ethanol (using pdc and adh) has been made as proof of concept. The scaffolds can also be targeted to the cell inner membrane (PubMed:29227472). The same CC-Di-B construct also targets proteins to the BMC, probably on the exterior face (PubMed:29573556).</text>
</comment>
<comment type="similarity">
    <text evidence="3">Belongs to the bacterial microcompartments protein family.</text>
</comment>
<gene>
    <name evidence="10" type="primary">pduA</name>
</gene>
<reference key="1">
    <citation type="journal article" date="2008" name="J. Biol. Chem.">
        <title>Biochemical and Structural Insights into Bacterial Organelle Form and Biogenesis.</title>
        <authorList>
            <person name="Parsons J.B."/>
            <person name="Dinesh S.D."/>
            <person name="Deery E."/>
            <person name="Leech H.K."/>
            <person name="Brindley A.A."/>
            <person name="Heldt D."/>
            <person name="Frank S."/>
            <person name="Smales C.M."/>
            <person name="Lunsdorf H."/>
            <person name="Rambach A."/>
            <person name="Gass M.H."/>
            <person name="Bleloch A."/>
            <person name="McClean K.J."/>
            <person name="Munro A.W."/>
            <person name="Rigby S.E.J."/>
            <person name="Warren M.J."/>
            <person name="Prentice M.B."/>
        </authorList>
    </citation>
    <scope>NUCLEOTIDE SEQUENCE [GENOMIC DNA]</scope>
    <scope>FUNCTION</scope>
    <scope>IDENTIFICATION BY MASS SPECTROMETRY</scope>
    <scope>PATHWAY</scope>
    <scope>SUBCELLULAR LOCATION</scope>
    <scope>DISRUPTION PHENOTYPE</scope>
</reference>
<reference key="2">
    <citation type="journal article" date="2010" name="Mol. Cell">
        <title>Synthesis of empty bacterial microcompartments, directed organelle protein incorporation, and evidence of filament-associated organelle movement.</title>
        <authorList>
            <person name="Parsons J.B."/>
            <person name="Frank S."/>
            <person name="Bhella D."/>
            <person name="Liang M."/>
            <person name="Prentice M.B."/>
            <person name="Mulvihill D.P."/>
            <person name="Warren M.J."/>
        </authorList>
    </citation>
    <scope>FUNCTION</scope>
    <scope>INTERACTION WITH PDUB; PDUB'; PDUJ; PDUK; PDUN AND PDUU</scope>
    <scope>SUBUNIT</scope>
    <scope>SUBCELLULAR LOCATION</scope>
    <scope>BIOTECHNOLOGY (ARTIFICIAL BMCS)</scope>
    <scope>MUTAGENESIS OF SER-93</scope>
</reference>
<reference key="3">
    <citation type="journal article" date="2014" name="ACS Synth. Biol.">
        <title>Solution structure of a bacterial microcompartment targeting peptide and its application in the construction of an ethanol bioreactor.</title>
        <authorList>
            <person name="Lawrence A.D."/>
            <person name="Frank S."/>
            <person name="Newnham S."/>
            <person name="Lee M.J."/>
            <person name="Brown I.R."/>
            <person name="Xue W.F."/>
            <person name="Rowe M.L."/>
            <person name="Mulvihill D.P."/>
            <person name="Prentice M.B."/>
            <person name="Howard M.J."/>
            <person name="Warren M.J."/>
        </authorList>
    </citation>
    <scope>BIOTECHNOLOGY (ARTIFICIAL BMCS)</scope>
</reference>
<reference key="4">
    <citation type="journal article" date="2015" name="PLoS Comput. Biol.">
        <title>Exploring bacterial organelle interactomes: a model of the protein-protein interaction network in the Pdu microcompartment.</title>
        <authorList>
            <person name="Jorda J."/>
            <person name="Liu Y."/>
            <person name="Bobik T.A."/>
            <person name="Yeates T.O."/>
        </authorList>
    </citation>
    <scope>MODELING OF BMCS</scope>
    <scope>FUNCTION</scope>
    <scope>SUBUNIT</scope>
    <scope>SUBCELLULAR LOCATION</scope>
</reference>
<reference key="5">
    <citation type="journal article" date="2018" name="Nat. Chem. Biol.">
        <title>Engineered synthetic scaffolds for organizing proteins within the bacterial cytoplasm.</title>
        <authorList>
            <person name="Lee M.J."/>
            <person name="Mantell J."/>
            <person name="Hodgson L."/>
            <person name="Alibhai D."/>
            <person name="Fletcher J.M."/>
            <person name="Brown I.R."/>
            <person name="Frank S."/>
            <person name="Xue W.F."/>
            <person name="Verkade P."/>
            <person name="Woolfson D.N."/>
            <person name="Warren M.J."/>
        </authorList>
    </citation>
    <scope>BIOTECHNOLOGY (INTRACELLULAR SCAFFOLDS)</scope>
</reference>
<reference key="6">
    <citation type="journal article" date="2018" name="Small">
        <title>A Generic Self-Assembly Process in Microcompartments and Synthetic Protein Nanotubes.</title>
        <authorList>
            <person name="Uddin I."/>
            <person name="Frank S."/>
            <person name="Warren M.J."/>
            <person name="Pickersgill R.W."/>
        </authorList>
    </citation>
    <scope>FUNCTION</scope>
    <scope>DISRUPTION PHENOTYPE</scope>
    <scope>BIOTECHNOLOGY (PERMUTATED PROTEIN)</scope>
</reference>
<reference evidence="17 18" key="7">
    <citation type="journal article" date="2014" name="J. Biol. Chem.">
        <title>Structural insights into higher order assembly and function of the bacterial microcompartment protein PduA.</title>
        <authorList>
            <person name="Pang A."/>
            <person name="Frank S."/>
            <person name="Brown I."/>
            <person name="Warren M.J."/>
            <person name="Pickersgill R.W."/>
        </authorList>
    </citation>
    <scope>X-RAY CRYSTALLOGRAPHY (1.72 ANGSTROMS) OF MUTATED 1-92</scope>
    <scope>FUNCTION</scope>
    <scope>SUBUNIT</scope>
    <scope>MUTAGENESIS OF LYS-26; VAL-51; ARG-79 AND SER-93</scope>
</reference>
<sequence length="93" mass="9464">MQQEALGMVETKGLTAAIEAADAMVKSANVMLVGYEKIGSGLVTVIVRGDVGAVKAATDAGAAAARNVGEVKAVHVIPRPHTDVEKILPKGIS</sequence>
<organism>
    <name type="scientific">Citrobacter freundii</name>
    <dbReference type="NCBI Taxonomy" id="546"/>
    <lineage>
        <taxon>Bacteria</taxon>
        <taxon>Pseudomonadati</taxon>
        <taxon>Pseudomonadota</taxon>
        <taxon>Gammaproteobacteria</taxon>
        <taxon>Enterobacterales</taxon>
        <taxon>Enterobacteriaceae</taxon>
        <taxon>Citrobacter</taxon>
        <taxon>Citrobacter freundii complex</taxon>
    </lineage>
</organism>
<accession>P0DUM6</accession>
<protein>
    <recommendedName>
        <fullName evidence="10">Bacterial microcompartment shell protein PduA</fullName>
    </recommendedName>
    <alternativeName>
        <fullName evidence="11">Bacterial microcompartment protein homohexamer</fullName>
        <shortName evidence="11">BMC-H</shortName>
    </alternativeName>
    <alternativeName>
        <fullName>Propanediol utilization protein PduA</fullName>
    </alternativeName>
</protein>
<evidence type="ECO:0000250" key="1">
    <source>
        <dbReference type="UniProtKB" id="P0A1C7"/>
    </source>
</evidence>
<evidence type="ECO:0000250" key="2">
    <source>
        <dbReference type="UniProtKB" id="P37448"/>
    </source>
</evidence>
<evidence type="ECO:0000255" key="3">
    <source>
        <dbReference type="PROSITE-ProRule" id="PRU01278"/>
    </source>
</evidence>
<evidence type="ECO:0000269" key="4">
    <source>
    </source>
</evidence>
<evidence type="ECO:0000269" key="5">
    <source>
    </source>
</evidence>
<evidence type="ECO:0000269" key="6">
    <source>
    </source>
</evidence>
<evidence type="ECO:0000269" key="7">
    <source>
    </source>
</evidence>
<evidence type="ECO:0000269" key="8">
    <source>
    </source>
</evidence>
<evidence type="ECO:0000269" key="9">
    <source>
    </source>
</evidence>
<evidence type="ECO:0000303" key="10">
    <source>
    </source>
</evidence>
<evidence type="ECO:0000305" key="11"/>
<evidence type="ECO:0000305" key="12">
    <source>
    </source>
</evidence>
<evidence type="ECO:0000305" key="13">
    <source>
    </source>
</evidence>
<evidence type="ECO:0000305" key="14">
    <source>
    </source>
</evidence>
<evidence type="ECO:0000305" key="15">
    <source>
    </source>
</evidence>
<evidence type="ECO:0000305" key="16">
    <source>
    </source>
</evidence>
<evidence type="ECO:0007744" key="17">
    <source>
        <dbReference type="PDB" id="4P7T"/>
    </source>
</evidence>
<evidence type="ECO:0007744" key="18">
    <source>
        <dbReference type="PDB" id="4P7V"/>
    </source>
</evidence>